<feature type="chain" id="PRO_0000217022" description="K(+)-insensitive pyrophosphate-energized proton pump">
    <location>
        <begin position="1"/>
        <end position="685"/>
    </location>
</feature>
<feature type="transmembrane region" description="Helical" evidence="2">
    <location>
        <begin position="3"/>
        <end position="23"/>
    </location>
</feature>
<feature type="transmembrane region" description="Helical" evidence="2">
    <location>
        <begin position="55"/>
        <end position="75"/>
    </location>
</feature>
<feature type="transmembrane region" description="Helical" evidence="2">
    <location>
        <begin position="78"/>
        <end position="98"/>
    </location>
</feature>
<feature type="transmembrane region" description="Helical" evidence="2">
    <location>
        <begin position="127"/>
        <end position="147"/>
    </location>
</feature>
<feature type="transmembrane region" description="Helical" evidence="2">
    <location>
        <begin position="157"/>
        <end position="177"/>
    </location>
</feature>
<feature type="transmembrane region" description="Helical" evidence="2">
    <location>
        <begin position="231"/>
        <end position="251"/>
    </location>
</feature>
<feature type="transmembrane region" description="Helical" evidence="2">
    <location>
        <begin position="260"/>
        <end position="280"/>
    </location>
</feature>
<feature type="transmembrane region" description="Helical" evidence="2">
    <location>
        <begin position="295"/>
        <end position="315"/>
    </location>
</feature>
<feature type="transmembrane region" description="Helical" evidence="2">
    <location>
        <begin position="333"/>
        <end position="353"/>
    </location>
</feature>
<feature type="transmembrane region" description="Helical" evidence="2">
    <location>
        <begin position="380"/>
        <end position="400"/>
    </location>
</feature>
<feature type="transmembrane region" description="Helical" evidence="2">
    <location>
        <begin position="402"/>
        <end position="422"/>
    </location>
</feature>
<feature type="transmembrane region" description="Helical" evidence="2">
    <location>
        <begin position="475"/>
        <end position="495"/>
    </location>
</feature>
<feature type="transmembrane region" description="Helical" evidence="2">
    <location>
        <begin position="510"/>
        <end position="530"/>
    </location>
</feature>
<feature type="transmembrane region" description="Helical" evidence="2">
    <location>
        <begin position="578"/>
        <end position="598"/>
    </location>
</feature>
<feature type="transmembrane region" description="Helical" evidence="2">
    <location>
        <begin position="600"/>
        <end position="620"/>
    </location>
</feature>
<feature type="binding site" evidence="1">
    <location>
        <position position="187"/>
    </location>
    <ligand>
        <name>substrate</name>
    </ligand>
</feature>
<feature type="binding site" evidence="1">
    <location>
        <position position="190"/>
    </location>
    <ligand>
        <name>Mg(2+)</name>
        <dbReference type="ChEBI" id="CHEBI:18420"/>
        <label>1</label>
    </ligand>
</feature>
<feature type="binding site" evidence="1">
    <location>
        <position position="194"/>
    </location>
    <ligand>
        <name>Mg(2+)</name>
        <dbReference type="ChEBI" id="CHEBI:18420"/>
        <label>1</label>
    </ligand>
</feature>
<feature type="binding site" evidence="1">
    <location>
        <position position="217"/>
    </location>
    <ligand>
        <name>Mg(2+)</name>
        <dbReference type="ChEBI" id="CHEBI:18420"/>
        <label>2</label>
    </ligand>
</feature>
<feature type="binding site" evidence="1">
    <location>
        <position position="220"/>
    </location>
    <ligand>
        <name>Mg(2+)</name>
        <dbReference type="ChEBI" id="CHEBI:18420"/>
        <label>2</label>
    </ligand>
</feature>
<feature type="binding site" evidence="1">
    <location>
        <position position="439"/>
    </location>
    <ligand>
        <name>Mg(2+)</name>
        <dbReference type="ChEBI" id="CHEBI:18420"/>
        <label>2</label>
    </ligand>
</feature>
<feature type="binding site" evidence="1">
    <location>
        <position position="627"/>
    </location>
    <ligand>
        <name>Ca(2+)</name>
        <dbReference type="ChEBI" id="CHEBI:29108"/>
    </ligand>
</feature>
<feature type="binding site" evidence="1">
    <location>
        <position position="653"/>
    </location>
    <ligand>
        <name>Ca(2+)</name>
        <dbReference type="ChEBI" id="CHEBI:29108"/>
    </ligand>
</feature>
<feature type="binding site" evidence="1">
    <location>
        <position position="657"/>
    </location>
    <ligand>
        <name>Ca(2+)</name>
        <dbReference type="ChEBI" id="CHEBI:29108"/>
    </ligand>
</feature>
<feature type="binding site" evidence="1">
    <location>
        <position position="660"/>
    </location>
    <ligand>
        <name>substrate</name>
    </ligand>
</feature>
<feature type="site" description="Important for ion transport" evidence="1">
    <location>
        <position position="179"/>
    </location>
</feature>
<feature type="site" description="Important for ion transport" evidence="1">
    <location>
        <position position="224"/>
    </location>
</feature>
<feature type="site" description="Important for ion transport" evidence="1">
    <location>
        <position position="231"/>
    </location>
</feature>
<feature type="site" description="Determinant of potassium independence" evidence="2">
    <location>
        <position position="469"/>
    </location>
</feature>
<feature type="site" description="Important for ion transport" evidence="1">
    <location>
        <position position="661"/>
    </location>
</feature>
<feature type="site" description="Important for ion transport" evidence="1">
    <location>
        <position position="672"/>
    </location>
</feature>
<keyword id="KW-0106">Calcium</keyword>
<keyword id="KW-0997">Cell inner membrane</keyword>
<keyword id="KW-1003">Cell membrane</keyword>
<keyword id="KW-0375">Hydrogen ion transport</keyword>
<keyword id="KW-0406">Ion transport</keyword>
<keyword id="KW-0460">Magnesium</keyword>
<keyword id="KW-0472">Membrane</keyword>
<keyword id="KW-0479">Metal-binding</keyword>
<keyword id="KW-1185">Reference proteome</keyword>
<keyword id="KW-1278">Translocase</keyword>
<keyword id="KW-0812">Transmembrane</keyword>
<keyword id="KW-1133">Transmembrane helix</keyword>
<keyword id="KW-0813">Transport</keyword>
<sequence length="685" mass="70050">MANGLTIAICSAILALIFSGLWIRRIYAQSAGDSRMQEIAAAVQEGASAYLKRQYLTIGMVGTVLFVIIGLALSWNTAIGFALGAILSGLAGFMGMNVSVQSNVRTAEAARSGLNEALAIAFRGGAVTGMLVVGLGLLGVAGYTALLVSGADETSSISDLIHPLIGFAFGGSLISIFARLGGGIFTKGADVGADLVGKVEAGIPEDDPRNPAVIADNVGDNVGDCAGMAADLFETYAVTIIATMLLGALLFKTGTGDAAVYPLALGAASIVASIIGCYFVKMREGGKIMNALYRGLAVAGGIAFFAYLPITVWFMGGATLTLDGTEVGGGELIMRLFASTTIGLVLTGLMVVITEYYTSTEYPPVQHIANASTTGHATNIIAGLGVGMRATAAPVLAVCASIIVAYSLAGLYGIAIAATAMLSMTGIIVALDAYGPITDNAGGIAEMAGMPESVRAVTDPLDAVGNTTKAVTKGYAIGSAGLAALVLFADYTHGLEHANKLMTFDLSNHLVIIGLFIGGMVPFLFGAMSMEAVGRAAGSVVLEVRRQFKEIPGIMDGSRKPDYSRAVDMLTKAAIREMIVPSLLPVLIPVLVGVFLGPQALGGVLMGSIVTGLFIAISMTAGGGAWDNAKKYIEDGNYGGKGSDAHKAAVTGDTVGDPYKDTAGPAINPLIKIINIVALLIIPLL</sequence>
<organism>
    <name type="scientific">Nitrosomonas europaea (strain ATCC 19718 / CIP 103999 / KCTC 2705 / NBRC 14298)</name>
    <dbReference type="NCBI Taxonomy" id="228410"/>
    <lineage>
        <taxon>Bacteria</taxon>
        <taxon>Pseudomonadati</taxon>
        <taxon>Pseudomonadota</taxon>
        <taxon>Betaproteobacteria</taxon>
        <taxon>Nitrosomonadales</taxon>
        <taxon>Nitrosomonadaceae</taxon>
        <taxon>Nitrosomonas</taxon>
    </lineage>
</organism>
<proteinExistence type="inferred from homology"/>
<dbReference type="EC" id="7.1.3.1" evidence="2"/>
<dbReference type="EMBL" id="AL954747">
    <property type="protein sequence ID" value="CAD85846.1"/>
    <property type="molecule type" value="Genomic_DNA"/>
</dbReference>
<dbReference type="RefSeq" id="WP_011112471.1">
    <property type="nucleotide sequence ID" value="NC_004757.1"/>
</dbReference>
<dbReference type="SMR" id="Q82TF3"/>
<dbReference type="STRING" id="228410.NE1935"/>
<dbReference type="GeneID" id="87105094"/>
<dbReference type="KEGG" id="neu:NE1935"/>
<dbReference type="eggNOG" id="COG3808">
    <property type="taxonomic scope" value="Bacteria"/>
</dbReference>
<dbReference type="HOGENOM" id="CLU_008743_3_1_4"/>
<dbReference type="OrthoDB" id="9808652at2"/>
<dbReference type="PhylomeDB" id="Q82TF3"/>
<dbReference type="Proteomes" id="UP000001416">
    <property type="component" value="Chromosome"/>
</dbReference>
<dbReference type="GO" id="GO:0005886">
    <property type="term" value="C:plasma membrane"/>
    <property type="evidence" value="ECO:0007669"/>
    <property type="project" value="UniProtKB-SubCell"/>
</dbReference>
<dbReference type="GO" id="GO:0009678">
    <property type="term" value="F:diphosphate hydrolysis-driven proton transmembrane transporter activity"/>
    <property type="evidence" value="ECO:0007669"/>
    <property type="project" value="UniProtKB-UniRule"/>
</dbReference>
<dbReference type="GO" id="GO:0004427">
    <property type="term" value="F:inorganic diphosphate phosphatase activity"/>
    <property type="evidence" value="ECO:0007669"/>
    <property type="project" value="UniProtKB-UniRule"/>
</dbReference>
<dbReference type="GO" id="GO:0000287">
    <property type="term" value="F:magnesium ion binding"/>
    <property type="evidence" value="ECO:0007669"/>
    <property type="project" value="UniProtKB-UniRule"/>
</dbReference>
<dbReference type="HAMAP" id="MF_01129">
    <property type="entry name" value="PPase_energized_pump"/>
    <property type="match status" value="1"/>
</dbReference>
<dbReference type="InterPro" id="IPR004131">
    <property type="entry name" value="PPase-energised_H-pump"/>
</dbReference>
<dbReference type="NCBIfam" id="NF001951">
    <property type="entry name" value="PRK00733.1-2"/>
    <property type="match status" value="1"/>
</dbReference>
<dbReference type="NCBIfam" id="NF001953">
    <property type="entry name" value="PRK00733.2-1"/>
    <property type="match status" value="1"/>
</dbReference>
<dbReference type="NCBIfam" id="NF001960">
    <property type="entry name" value="PRK00733.3-5"/>
    <property type="match status" value="1"/>
</dbReference>
<dbReference type="NCBIfam" id="TIGR01104">
    <property type="entry name" value="V_PPase"/>
    <property type="match status" value="1"/>
</dbReference>
<dbReference type="PANTHER" id="PTHR31998">
    <property type="entry name" value="K(+)-INSENSITIVE PYROPHOSPHATE-ENERGIZED PROTON PUMP"/>
    <property type="match status" value="1"/>
</dbReference>
<dbReference type="Pfam" id="PF03030">
    <property type="entry name" value="H_PPase"/>
    <property type="match status" value="1"/>
</dbReference>
<dbReference type="PIRSF" id="PIRSF001265">
    <property type="entry name" value="H+-PPase"/>
    <property type="match status" value="1"/>
</dbReference>
<protein>
    <recommendedName>
        <fullName evidence="2">K(+)-insensitive pyrophosphate-energized proton pump</fullName>
        <ecNumber evidence="2">7.1.3.1</ecNumber>
    </recommendedName>
    <alternativeName>
        <fullName evidence="2">Membrane-bound proton-translocating pyrophosphatase</fullName>
    </alternativeName>
    <alternativeName>
        <fullName evidence="2">Pyrophosphate-energized inorganic pyrophosphatase</fullName>
        <shortName evidence="2">H(+)-PPase</shortName>
    </alternativeName>
</protein>
<evidence type="ECO:0000250" key="1"/>
<evidence type="ECO:0000255" key="2">
    <source>
        <dbReference type="HAMAP-Rule" id="MF_01129"/>
    </source>
</evidence>
<comment type="function">
    <text evidence="2">Proton pump that utilizes the energy of pyrophosphate hydrolysis as the driving force for proton movement across the membrane. Generates a proton motive force.</text>
</comment>
<comment type="catalytic activity">
    <reaction evidence="2">
        <text>diphosphate + H2O + H(+)(in) = 2 phosphate + 2 H(+)(out)</text>
        <dbReference type="Rhea" id="RHEA:13973"/>
        <dbReference type="ChEBI" id="CHEBI:15377"/>
        <dbReference type="ChEBI" id="CHEBI:15378"/>
        <dbReference type="ChEBI" id="CHEBI:33019"/>
        <dbReference type="ChEBI" id="CHEBI:43474"/>
        <dbReference type="EC" id="7.1.3.1"/>
    </reaction>
</comment>
<comment type="cofactor">
    <cofactor evidence="2">
        <name>Mg(2+)</name>
        <dbReference type="ChEBI" id="CHEBI:18420"/>
    </cofactor>
</comment>
<comment type="subunit">
    <text evidence="2">Homodimer.</text>
</comment>
<comment type="subcellular location">
    <subcellularLocation>
        <location evidence="2">Cell inner membrane</location>
        <topology evidence="2">Multi-pass membrane protein</topology>
    </subcellularLocation>
</comment>
<comment type="similarity">
    <text evidence="2">Belongs to the H(+)-translocating pyrophosphatase (TC 3.A.10) family. K(+)-insensitive subfamily.</text>
</comment>
<accession>Q82TF3</accession>
<gene>
    <name evidence="2" type="primary">hppA</name>
    <name type="ordered locus">NE1935</name>
</gene>
<reference key="1">
    <citation type="journal article" date="2003" name="J. Bacteriol.">
        <title>Complete genome sequence of the ammonia-oxidizing bacterium and obligate chemolithoautotroph Nitrosomonas europaea.</title>
        <authorList>
            <person name="Chain P."/>
            <person name="Lamerdin J.E."/>
            <person name="Larimer F.W."/>
            <person name="Regala W."/>
            <person name="Lao V."/>
            <person name="Land M.L."/>
            <person name="Hauser L."/>
            <person name="Hooper A.B."/>
            <person name="Klotz M.G."/>
            <person name="Norton J."/>
            <person name="Sayavedra-Soto L.A."/>
            <person name="Arciero D.M."/>
            <person name="Hommes N.G."/>
            <person name="Whittaker M.M."/>
            <person name="Arp D.J."/>
        </authorList>
    </citation>
    <scope>NUCLEOTIDE SEQUENCE [LARGE SCALE GENOMIC DNA]</scope>
    <source>
        <strain>ATCC 19718 / CIP 103999 / KCTC 2705 / NBRC 14298</strain>
    </source>
</reference>
<name>HPPA_NITEU</name>